<reference key="1">
    <citation type="journal article" date="2017" name="Nat. Commun.">
        <title>WIPI3 and WIPI4 beta-propellers are scaffolds for LKB1-AMPK-TSC signalling circuits in the control of autophagy.</title>
        <authorList>
            <person name="Bakula D."/>
            <person name="Mueller A.J."/>
            <person name="Zuleger T."/>
            <person name="Takacs Z."/>
            <person name="Franz-Wachtel M."/>
            <person name="Thost A.K."/>
            <person name="Brigger D."/>
            <person name="Tschan M.P."/>
            <person name="Frickey T."/>
            <person name="Robenek H."/>
            <person name="Macek B."/>
            <person name="Proikas-Cezanne T."/>
        </authorList>
    </citation>
    <scope>NUCLEOTIDE SEQUENCE [MRNA]</scope>
    <scope>FUNCTION</scope>
    <scope>PHOSPHOINOSITIDES-BINDING</scope>
    <scope>INTERACTION WITH RB1CC1; TSC1 AND TSC2</scope>
    <scope>SUBCELLULAR LOCATION</scope>
    <scope>MUTAGENESIS OF 225-ARG-226</scope>
    <source>
        <tissue>Liver</tissue>
    </source>
</reference>
<reference key="2">
    <citation type="submission" date="2006-01" db="EMBL/GenBank/DDBJ databases">
        <title>Identification and characterization of human WIPI-3 in silico.</title>
        <authorList>
            <person name="Wang H."/>
            <person name="Ma X."/>
            <person name="Zhang Y."/>
            <person name="Wu C."/>
        </authorList>
    </citation>
    <scope>NUCLEOTIDE SEQUENCE [MRNA]</scope>
    <source>
        <tissue>Testis</tissue>
    </source>
</reference>
<reference key="3">
    <citation type="journal article" date="2006" name="Nature">
        <title>DNA sequence of human chromosome 17 and analysis of rearrangement in the human lineage.</title>
        <authorList>
            <person name="Zody M.C."/>
            <person name="Garber M."/>
            <person name="Adams D.J."/>
            <person name="Sharpe T."/>
            <person name="Harrow J."/>
            <person name="Lupski J.R."/>
            <person name="Nicholson C."/>
            <person name="Searle S.M."/>
            <person name="Wilming L."/>
            <person name="Young S.K."/>
            <person name="Abouelleil A."/>
            <person name="Allen N.R."/>
            <person name="Bi W."/>
            <person name="Bloom T."/>
            <person name="Borowsky M.L."/>
            <person name="Bugalter B.E."/>
            <person name="Butler J."/>
            <person name="Chang J.L."/>
            <person name="Chen C.-K."/>
            <person name="Cook A."/>
            <person name="Corum B."/>
            <person name="Cuomo C.A."/>
            <person name="de Jong P.J."/>
            <person name="DeCaprio D."/>
            <person name="Dewar K."/>
            <person name="FitzGerald M."/>
            <person name="Gilbert J."/>
            <person name="Gibson R."/>
            <person name="Gnerre S."/>
            <person name="Goldstein S."/>
            <person name="Grafham D.V."/>
            <person name="Grocock R."/>
            <person name="Hafez N."/>
            <person name="Hagopian D.S."/>
            <person name="Hart E."/>
            <person name="Norman C.H."/>
            <person name="Humphray S."/>
            <person name="Jaffe D.B."/>
            <person name="Jones M."/>
            <person name="Kamal M."/>
            <person name="Khodiyar V.K."/>
            <person name="LaButti K."/>
            <person name="Laird G."/>
            <person name="Lehoczky J."/>
            <person name="Liu X."/>
            <person name="Lokyitsang T."/>
            <person name="Loveland J."/>
            <person name="Lui A."/>
            <person name="Macdonald P."/>
            <person name="Major J.E."/>
            <person name="Matthews L."/>
            <person name="Mauceli E."/>
            <person name="McCarroll S.A."/>
            <person name="Mihalev A.H."/>
            <person name="Mudge J."/>
            <person name="Nguyen C."/>
            <person name="Nicol R."/>
            <person name="O'Leary S.B."/>
            <person name="Osoegawa K."/>
            <person name="Schwartz D.C."/>
            <person name="Shaw-Smith C."/>
            <person name="Stankiewicz P."/>
            <person name="Steward C."/>
            <person name="Swarbreck D."/>
            <person name="Venkataraman V."/>
            <person name="Whittaker C.A."/>
            <person name="Yang X."/>
            <person name="Zimmer A.R."/>
            <person name="Bradley A."/>
            <person name="Hubbard T."/>
            <person name="Birren B.W."/>
            <person name="Rogers J."/>
            <person name="Lander E.S."/>
            <person name="Nusbaum C."/>
        </authorList>
    </citation>
    <scope>NUCLEOTIDE SEQUENCE [LARGE SCALE GENOMIC DNA]</scope>
</reference>
<reference key="4">
    <citation type="submission" date="2005-07" db="EMBL/GenBank/DDBJ databases">
        <authorList>
            <person name="Mural R.J."/>
            <person name="Istrail S."/>
            <person name="Sutton G.G."/>
            <person name="Florea L."/>
            <person name="Halpern A.L."/>
            <person name="Mobarry C.M."/>
            <person name="Lippert R."/>
            <person name="Walenz B."/>
            <person name="Shatkay H."/>
            <person name="Dew I."/>
            <person name="Miller J.R."/>
            <person name="Flanigan M.J."/>
            <person name="Edwards N.J."/>
            <person name="Bolanos R."/>
            <person name="Fasulo D."/>
            <person name="Halldorsson B.V."/>
            <person name="Hannenhalli S."/>
            <person name="Turner R."/>
            <person name="Yooseph S."/>
            <person name="Lu F."/>
            <person name="Nusskern D.R."/>
            <person name="Shue B.C."/>
            <person name="Zheng X.H."/>
            <person name="Zhong F."/>
            <person name="Delcher A.L."/>
            <person name="Huson D.H."/>
            <person name="Kravitz S.A."/>
            <person name="Mouchard L."/>
            <person name="Reinert K."/>
            <person name="Remington K.A."/>
            <person name="Clark A.G."/>
            <person name="Waterman M.S."/>
            <person name="Eichler E.E."/>
            <person name="Adams M.D."/>
            <person name="Hunkapiller M.W."/>
            <person name="Myers E.W."/>
            <person name="Venter J.C."/>
        </authorList>
    </citation>
    <scope>NUCLEOTIDE SEQUENCE [LARGE SCALE GENOMIC DNA]</scope>
</reference>
<reference key="5">
    <citation type="submission" date="1998-08" db="EMBL/GenBank/DDBJ databases">
        <title>Full-insert sequence of mapped XREF EST.</title>
        <authorList>
            <person name="Barrow I.K.-P."/>
            <person name="Boguski M.S."/>
            <person name="Touchman J.W."/>
            <person name="Spencer F."/>
        </authorList>
    </citation>
    <scope>NUCLEOTIDE SEQUENCE [LARGE SCALE MRNA] OF 55-344</scope>
</reference>
<reference key="6">
    <citation type="journal article" date="2004" name="Oncogene">
        <title>WIPI-1alpha (WIPI49), a member of the novel 7-bladed WIPI protein family, is aberrantly expressed in human cancer and is linked to starvation-induced autophagy.</title>
        <authorList>
            <person name="Proikas-Cezanne T."/>
            <person name="Waddell S."/>
            <person name="Gaugel A."/>
            <person name="Frickey T."/>
            <person name="Lupas A."/>
            <person name="Nordheim A."/>
        </authorList>
    </citation>
    <scope>NUCLEOTIDE SEQUENCE [MRNA] OF 59-344</scope>
    <scope>TISSUE SPECIFICITY</scope>
    <source>
        <tissue>Testis</tissue>
    </source>
</reference>
<reference key="7">
    <citation type="submission" date="2004-06" db="EMBL/GenBank/DDBJ databases">
        <title>Cloning of human full open reading frames in Gateway(TM) system entry vector (pDONR201).</title>
        <authorList>
            <person name="Ebert L."/>
            <person name="Schick M."/>
            <person name="Neubert P."/>
            <person name="Schatten R."/>
            <person name="Henze S."/>
            <person name="Korn B."/>
        </authorList>
    </citation>
    <scope>NUCLEOTIDE SEQUENCE [LARGE SCALE MRNA] OF 59-344</scope>
</reference>
<reference key="8">
    <citation type="journal article" date="2018" name="Clin. Genet.">
        <title>WDR45B-related intellectual disability, spastic quadriplegia, epilepsy, and cerebral hypoplasia: A consistent neurodevelopmental syndrome.</title>
        <authorList>
            <person name="Suleiman J."/>
            <person name="Allingham-Hawkins D."/>
            <person name="Hashem M."/>
            <person name="Shamseldin H.E."/>
            <person name="Alkuraya F.S."/>
            <person name="El-Hattab A.W."/>
        </authorList>
    </citation>
    <scope>INVOLVEMENT IN NEDSBAS</scope>
    <scope>VARIANTS NEDSBAS 225-ARG--LEU-344 DEL AND 267-GLN--LEU-344 DEL</scope>
</reference>
<reference evidence="8" key="9">
    <citation type="journal article" date="2019" name="J. Mol. Biol.">
        <title>Structural Conservation of the Two Phosphoinositide-Binding Sites in WIPI Proteins.</title>
        <authorList>
            <person name="Liang R."/>
            <person name="Ren J."/>
            <person name="Zhang Y."/>
            <person name="Feng W."/>
        </authorList>
    </citation>
    <scope>X-RAY CRYSTALLOGRAPHY (1.80 ANGSTROMS) OF 8-344</scope>
    <scope>FUNCTION</scope>
    <scope>MUTAGENESIS OF ARG-62; HIS-184; SER-204; LYS-206; THR-208; ARG-211; ARG-225; ARG-226 AND HIS-255</scope>
</reference>
<reference evidence="9" key="10">
    <citation type="journal article" date="2020" name="Nat. Commun.">
        <title>Multi-site-mediated entwining of the linear WIR-motif around WIPI beta-propellers for autophagy.</title>
        <authorList>
            <person name="Ren J."/>
            <person name="Liang R."/>
            <person name="Wang W."/>
            <person name="Zhang D."/>
            <person name="Yu L."/>
            <person name="Feng W."/>
        </authorList>
    </citation>
    <scope>X-RAY CRYSTALLOGRAPHY (2.21 ANGSTROMS) OF 8-344 IN COMPLEX WITH ATG2A</scope>
    <scope>INTERACTION WITH ATG2A</scope>
    <scope>MUTAGENESIS OF 19-ASN--HIS-22; VAL-35; 59-MET--ARG-62; TYR-65; 96-ILE--PHE-98 AND PHE-125</scope>
</reference>
<comment type="function">
    <text evidence="3 4 5">Component of the autophagy machinery that controls the major intracellular degradation process by which cytoplasmic materials are packaged into autophagosomes and delivered to lysosomes for degradation (PubMed:28561066). Binds phosphatidylinositol 3-phosphate (PtdIns3P), and other phosphoinositides including PtdIns(3,5)P2, forming on membranes of the endoplasmic reticulum upon activation of the upstream ULK1 and PI3 kinases and is recruited at phagophore assembly sites where it regulates the elongation of nascent phagophores downstream of WIPI2 (PubMed:28561066, PubMed:30797857). In the cellular response to starvation, may also function together with the TSC1-TSC2 complex and RB1CC1 in the inhibition of the mTORC1 signaling pathway (PubMed:28503735).</text>
</comment>
<comment type="subunit">
    <text evidence="4 6">Interacts with the TSC1-TSC2 complex; stimulated upon starvation (PubMed:28561066). Interacts with RB1CC1 (PubMed:28561066). Interacts with ATG2A (PubMed:32483132).</text>
</comment>
<comment type="interaction">
    <interactant intactId="EBI-2819021">
        <id>Q5MNZ6</id>
    </interactant>
    <interactant intactId="EBI-25474821">
        <id>P0DTC2</id>
        <label>S</label>
    </interactant>
    <organismsDiffer>true</organismsDiffer>
    <experiments>4</experiments>
</comment>
<comment type="subcellular location">
    <subcellularLocation>
        <location evidence="4">Preautophagosomal structure</location>
    </subcellularLocation>
    <subcellularLocation>
        <location evidence="4">Lysosome</location>
    </subcellularLocation>
</comment>
<comment type="tissue specificity">
    <text evidence="2">Ubiquitously expressed. Highly expressed in heart, skeletal muscle and pancreas. Up-regulated in a variety of tumor tissues including ovarian and uterine cancers.</text>
</comment>
<comment type="domain">
    <text evidence="1">The L/FRRG motif is required for recruitment to PtdIns3P.</text>
</comment>
<comment type="disease" evidence="3">
    <disease id="DI-05249">
        <name>Neurodevelopmental disorder with spastic quadriplegia and brain abnormalities with or without seizures</name>
        <acronym>NEDSBAS</acronym>
        <description>An autosomal recessive disorder characterized by profound developmental delay, progressive spastic quadriplegia and contractures, early-onset refractory epilepsy in most patients, and brain malformations. Neuroimaging shows ventriculomegaly, reduced cerebral white matter volume, and thinning of cerebral gray matter.</description>
        <dbReference type="MIM" id="617977"/>
    </disease>
    <text>The disease may be caused by variants affecting the gene represented in this entry.</text>
</comment>
<comment type="similarity">
    <text evidence="7">Belongs to the WD repeat PROPPIN family.</text>
</comment>
<comment type="sequence caution" evidence="7">
    <conflict type="erroneous initiation">
        <sequence resource="EMBL-CDS" id="AAC72952"/>
    </conflict>
    <text>Truncated N-terminus.</text>
</comment>
<comment type="sequence caution" evidence="7">
    <conflict type="erroneous initiation">
        <sequence resource="EMBL-CDS" id="ASF79340"/>
    </conflict>
    <text>Extended N-terminus.</text>
</comment>
<sequence>MNLLPCNPHGNGLLYAGFNQDHGCFACGMENGFRVYNTDPLKEKEKQEFLEGGVGHVEMLFRCNYLALVGGGKKPKYPPNKVMIWDDLKKKTVIEIEFSTEVKAVKLRRDRIVVVLDSMIKVFTFTHNPHQLHVFETCYNPKGLCVLCPNSNNSLLAFPGTHTGHVQLVDLASTEKPPVDIPAHEGVLSCIALNLQGTRIATASEKGTLIRIFDTSSGHLIQELRRGSQAANIYCINFNQDASLICVSSDHGTVHIFAAEDPKRNKQSSLASASFLPKYFSSKWSFSKFQVPSGSPCICAFGTEPNAVIAICADGSYYKFLFNPKGECIRDVYAQFLEMTDDKL</sequence>
<accession>Q5MNZ6</accession>
<accession>A0A024R8U4</accession>
<accession>A0A218N098</accession>
<accession>O95328</accession>
<accession>Q2MCP6</accession>
<accession>Q6IBN2</accession>
<gene>
    <name type="primary">WDR45B</name>
    <name type="synonym">WDR45L</name>
    <name type="synonym">WIPI3</name>
</gene>
<evidence type="ECO:0000250" key="1">
    <source>
        <dbReference type="UniProtKB" id="Q9Y4P8"/>
    </source>
</evidence>
<evidence type="ECO:0000269" key="2">
    <source>
    </source>
</evidence>
<evidence type="ECO:0000269" key="3">
    <source>
    </source>
</evidence>
<evidence type="ECO:0000269" key="4">
    <source>
    </source>
</evidence>
<evidence type="ECO:0000269" key="5">
    <source>
    </source>
</evidence>
<evidence type="ECO:0000269" key="6">
    <source>
    </source>
</evidence>
<evidence type="ECO:0000305" key="7"/>
<evidence type="ECO:0007744" key="8">
    <source>
        <dbReference type="PDB" id="6IYY"/>
    </source>
</evidence>
<evidence type="ECO:0007744" key="9">
    <source>
        <dbReference type="PDB" id="6KLR"/>
    </source>
</evidence>
<evidence type="ECO:0007829" key="10">
    <source>
        <dbReference type="PDB" id="6IYY"/>
    </source>
</evidence>
<dbReference type="EMBL" id="AM182326">
    <property type="protein sequence ID" value="CAJ57996.1"/>
    <property type="molecule type" value="mRNA"/>
</dbReference>
<dbReference type="EMBL" id="KX434429">
    <property type="protein sequence ID" value="ASF79340.1"/>
    <property type="status" value="ALT_INIT"/>
    <property type="molecule type" value="mRNA"/>
</dbReference>
<dbReference type="EMBL" id="AC124283">
    <property type="status" value="NOT_ANNOTATED_CDS"/>
    <property type="molecule type" value="Genomic_DNA"/>
</dbReference>
<dbReference type="EMBL" id="CH471099">
    <property type="protein sequence ID" value="EAW89810.1"/>
    <property type="molecule type" value="Genomic_DNA"/>
</dbReference>
<dbReference type="EMBL" id="CH471099">
    <property type="protein sequence ID" value="EAW89812.1"/>
    <property type="molecule type" value="Genomic_DNA"/>
</dbReference>
<dbReference type="EMBL" id="AF091083">
    <property type="protein sequence ID" value="AAC72952.1"/>
    <property type="status" value="ALT_INIT"/>
    <property type="molecule type" value="mRNA"/>
</dbReference>
<dbReference type="EMBL" id="AY691427">
    <property type="protein sequence ID" value="AAV80763.1"/>
    <property type="molecule type" value="mRNA"/>
</dbReference>
<dbReference type="EMBL" id="CR456770">
    <property type="protein sequence ID" value="CAG33051.1"/>
    <property type="molecule type" value="mRNA"/>
</dbReference>
<dbReference type="CCDS" id="CCDS11815.2"/>
<dbReference type="RefSeq" id="NP_062559.2">
    <property type="nucleotide sequence ID" value="NM_019613.4"/>
</dbReference>
<dbReference type="PDB" id="6IYY">
    <property type="method" value="X-ray"/>
    <property type="resolution" value="1.80 A"/>
    <property type="chains" value="A=8-344"/>
</dbReference>
<dbReference type="PDB" id="6KLR">
    <property type="method" value="X-ray"/>
    <property type="resolution" value="2.21 A"/>
    <property type="chains" value="A/B=8-344"/>
</dbReference>
<dbReference type="PDB" id="8ZQG">
    <property type="method" value="X-ray"/>
    <property type="resolution" value="2.77 A"/>
    <property type="chains" value="A/B=8-344"/>
</dbReference>
<dbReference type="PDB" id="9C9I">
    <property type="method" value="X-ray"/>
    <property type="resolution" value="3.18 A"/>
    <property type="chains" value="A/C/E/G=12-344"/>
</dbReference>
<dbReference type="PDB" id="9CE3">
    <property type="method" value="EM"/>
    <property type="resolution" value="2.90 A"/>
    <property type="chains" value="F=12-344"/>
</dbReference>
<dbReference type="PDBsum" id="6IYY"/>
<dbReference type="PDBsum" id="6KLR"/>
<dbReference type="PDBsum" id="8ZQG"/>
<dbReference type="PDBsum" id="9C9I"/>
<dbReference type="PDBsum" id="9CE3"/>
<dbReference type="EMDB" id="EMD-45492"/>
<dbReference type="SMR" id="Q5MNZ6"/>
<dbReference type="BioGRID" id="121130">
    <property type="interactions" value="70"/>
</dbReference>
<dbReference type="FunCoup" id="Q5MNZ6">
    <property type="interactions" value="3562"/>
</dbReference>
<dbReference type="IntAct" id="Q5MNZ6">
    <property type="interactions" value="72"/>
</dbReference>
<dbReference type="MINT" id="Q5MNZ6"/>
<dbReference type="STRING" id="9606.ENSP00000376139"/>
<dbReference type="iPTMnet" id="Q5MNZ6"/>
<dbReference type="PhosphoSitePlus" id="Q5MNZ6"/>
<dbReference type="BioMuta" id="WDR45B"/>
<dbReference type="DMDM" id="85542094"/>
<dbReference type="jPOST" id="Q5MNZ6"/>
<dbReference type="MassIVE" id="Q5MNZ6"/>
<dbReference type="PaxDb" id="9606-ENSP00000376139"/>
<dbReference type="PeptideAtlas" id="Q5MNZ6"/>
<dbReference type="ProteomicsDB" id="63589"/>
<dbReference type="Pumba" id="Q5MNZ6"/>
<dbReference type="Antibodypedia" id="19917">
    <property type="antibodies" value="115 antibodies from 18 providers"/>
</dbReference>
<dbReference type="DNASU" id="56270"/>
<dbReference type="Ensembl" id="ENST00000392325.9">
    <property type="protein sequence ID" value="ENSP00000376139.4"/>
    <property type="gene ID" value="ENSG00000141580.16"/>
</dbReference>
<dbReference type="GeneID" id="56270"/>
<dbReference type="KEGG" id="hsa:56270"/>
<dbReference type="MANE-Select" id="ENST00000392325.9">
    <property type="protein sequence ID" value="ENSP00000376139.4"/>
    <property type="RefSeq nucleotide sequence ID" value="NM_019613.4"/>
    <property type="RefSeq protein sequence ID" value="NP_062559.2"/>
</dbReference>
<dbReference type="UCSC" id="uc002kfq.3">
    <property type="organism name" value="human"/>
</dbReference>
<dbReference type="AGR" id="HGNC:25072"/>
<dbReference type="CTD" id="56270"/>
<dbReference type="DisGeNET" id="56270"/>
<dbReference type="GeneCards" id="WDR45B"/>
<dbReference type="GeneReviews" id="WDR45B"/>
<dbReference type="HGNC" id="HGNC:25072">
    <property type="gene designation" value="WDR45B"/>
</dbReference>
<dbReference type="HPA" id="ENSG00000141580">
    <property type="expression patterns" value="Low tissue specificity"/>
</dbReference>
<dbReference type="MalaCards" id="WDR45B"/>
<dbReference type="MIM" id="609226">
    <property type="type" value="gene"/>
</dbReference>
<dbReference type="MIM" id="617977">
    <property type="type" value="phenotype"/>
</dbReference>
<dbReference type="neXtProt" id="NX_Q5MNZ6"/>
<dbReference type="OpenTargets" id="ENSG00000141580"/>
<dbReference type="PharmGKB" id="PA134894387"/>
<dbReference type="VEuPathDB" id="HostDB:ENSG00000141580"/>
<dbReference type="eggNOG" id="KOG2111">
    <property type="taxonomic scope" value="Eukaryota"/>
</dbReference>
<dbReference type="GeneTree" id="ENSGT00940000157510"/>
<dbReference type="InParanoid" id="Q5MNZ6"/>
<dbReference type="OMA" id="GGPQCMC"/>
<dbReference type="OrthoDB" id="1667587at2759"/>
<dbReference type="PAN-GO" id="Q5MNZ6">
    <property type="GO annotations" value="9 GO annotations based on evolutionary models"/>
</dbReference>
<dbReference type="PhylomeDB" id="Q5MNZ6"/>
<dbReference type="TreeFam" id="TF314859"/>
<dbReference type="PathwayCommons" id="Q5MNZ6"/>
<dbReference type="Reactome" id="R-HSA-1632852">
    <property type="pathway name" value="Macroautophagy"/>
</dbReference>
<dbReference type="SignaLink" id="Q5MNZ6"/>
<dbReference type="SIGNOR" id="Q5MNZ6"/>
<dbReference type="BioGRID-ORCS" id="56270">
    <property type="hits" value="10 hits in 1157 CRISPR screens"/>
</dbReference>
<dbReference type="ChiTaRS" id="WDR45B">
    <property type="organism name" value="human"/>
</dbReference>
<dbReference type="GeneWiki" id="WDR45L"/>
<dbReference type="GenomeRNAi" id="56270"/>
<dbReference type="Pharos" id="Q5MNZ6">
    <property type="development level" value="Tbio"/>
</dbReference>
<dbReference type="PRO" id="PR:Q5MNZ6"/>
<dbReference type="Proteomes" id="UP000005640">
    <property type="component" value="Chromosome 17"/>
</dbReference>
<dbReference type="RNAct" id="Q5MNZ6">
    <property type="molecule type" value="protein"/>
</dbReference>
<dbReference type="Bgee" id="ENSG00000141580">
    <property type="expression patterns" value="Expressed in secondary oocyte and 207 other cell types or tissues"/>
</dbReference>
<dbReference type="ExpressionAtlas" id="Q5MNZ6">
    <property type="expression patterns" value="baseline and differential"/>
</dbReference>
<dbReference type="GO" id="GO:0005829">
    <property type="term" value="C:cytosol"/>
    <property type="evidence" value="ECO:0000318"/>
    <property type="project" value="GO_Central"/>
</dbReference>
<dbReference type="GO" id="GO:0005764">
    <property type="term" value="C:lysosome"/>
    <property type="evidence" value="ECO:0000314"/>
    <property type="project" value="UniProtKB"/>
</dbReference>
<dbReference type="GO" id="GO:0000407">
    <property type="term" value="C:phagophore assembly site"/>
    <property type="evidence" value="ECO:0000314"/>
    <property type="project" value="UniProtKB"/>
</dbReference>
<dbReference type="GO" id="GO:0034045">
    <property type="term" value="C:phagophore assembly site membrane"/>
    <property type="evidence" value="ECO:0000318"/>
    <property type="project" value="GO_Central"/>
</dbReference>
<dbReference type="GO" id="GO:0080025">
    <property type="term" value="F:phosphatidylinositol-3,5-bisphosphate binding"/>
    <property type="evidence" value="ECO:0000314"/>
    <property type="project" value="UniProtKB"/>
</dbReference>
<dbReference type="GO" id="GO:0032266">
    <property type="term" value="F:phosphatidylinositol-3-phosphate binding"/>
    <property type="evidence" value="ECO:0000314"/>
    <property type="project" value="UniProtKB"/>
</dbReference>
<dbReference type="GO" id="GO:0030674">
    <property type="term" value="F:protein-macromolecule adaptor activity"/>
    <property type="evidence" value="ECO:0000318"/>
    <property type="project" value="GO_Central"/>
</dbReference>
<dbReference type="GO" id="GO:0062078">
    <property type="term" value="F:TSC1-TSC2 complex binding"/>
    <property type="evidence" value="ECO:0000314"/>
    <property type="project" value="UniProtKB"/>
</dbReference>
<dbReference type="GO" id="GO:0000045">
    <property type="term" value="P:autophagosome assembly"/>
    <property type="evidence" value="ECO:0000315"/>
    <property type="project" value="UniProtKB"/>
</dbReference>
<dbReference type="GO" id="GO:0000422">
    <property type="term" value="P:autophagy of mitochondrion"/>
    <property type="evidence" value="ECO:0000318"/>
    <property type="project" value="GO_Central"/>
</dbReference>
<dbReference type="GO" id="GO:0009267">
    <property type="term" value="P:cellular response to starvation"/>
    <property type="evidence" value="ECO:0000314"/>
    <property type="project" value="UniProtKB"/>
</dbReference>
<dbReference type="GO" id="GO:0061723">
    <property type="term" value="P:glycophagy"/>
    <property type="evidence" value="ECO:0000318"/>
    <property type="project" value="GO_Central"/>
</dbReference>
<dbReference type="GO" id="GO:0044804">
    <property type="term" value="P:nucleophagy"/>
    <property type="evidence" value="ECO:0000318"/>
    <property type="project" value="GO_Central"/>
</dbReference>
<dbReference type="GO" id="GO:0000425">
    <property type="term" value="P:pexophagy"/>
    <property type="evidence" value="ECO:0000318"/>
    <property type="project" value="GO_Central"/>
</dbReference>
<dbReference type="GO" id="GO:0034497">
    <property type="term" value="P:protein localization to phagophore assembly site"/>
    <property type="evidence" value="ECO:0000318"/>
    <property type="project" value="GO_Central"/>
</dbReference>
<dbReference type="FunFam" id="2.130.10.10:FF:000083">
    <property type="entry name" value="WD repeat domain phosphoinositide-interacting protein 3"/>
    <property type="match status" value="1"/>
</dbReference>
<dbReference type="Gene3D" id="2.130.10.10">
    <property type="entry name" value="YVTN repeat-like/Quinoprotein amine dehydrogenase"/>
    <property type="match status" value="1"/>
</dbReference>
<dbReference type="InterPro" id="IPR048720">
    <property type="entry name" value="PROPPIN"/>
</dbReference>
<dbReference type="InterPro" id="IPR015943">
    <property type="entry name" value="WD40/YVTN_repeat-like_dom_sf"/>
</dbReference>
<dbReference type="InterPro" id="IPR036322">
    <property type="entry name" value="WD40_repeat_dom_sf"/>
</dbReference>
<dbReference type="InterPro" id="IPR001680">
    <property type="entry name" value="WD40_rpt"/>
</dbReference>
<dbReference type="PANTHER" id="PTHR11227">
    <property type="entry name" value="WD-REPEAT PROTEIN INTERACTING WITH PHOSPHOINOSIDES WIPI -RELATED"/>
    <property type="match status" value="1"/>
</dbReference>
<dbReference type="Pfam" id="PF21032">
    <property type="entry name" value="PROPPIN"/>
    <property type="match status" value="1"/>
</dbReference>
<dbReference type="SMART" id="SM00320">
    <property type="entry name" value="WD40"/>
    <property type="match status" value="2"/>
</dbReference>
<dbReference type="SUPFAM" id="SSF50978">
    <property type="entry name" value="WD40 repeat-like"/>
    <property type="match status" value="1"/>
</dbReference>
<keyword id="KW-0002">3D-structure</keyword>
<keyword id="KW-0072">Autophagy</keyword>
<keyword id="KW-0225">Disease variant</keyword>
<keyword id="KW-0887">Epilepsy</keyword>
<keyword id="KW-0446">Lipid-binding</keyword>
<keyword id="KW-0458">Lysosome</keyword>
<keyword id="KW-1267">Proteomics identification</keyword>
<keyword id="KW-1185">Reference proteome</keyword>
<keyword id="KW-0677">Repeat</keyword>
<keyword id="KW-0853">WD repeat</keyword>
<name>WIPI3_HUMAN</name>
<feature type="chain" id="PRO_0000051445" description="WD repeat domain phosphoinositide-interacting protein 3">
    <location>
        <begin position="1"/>
        <end position="344"/>
    </location>
</feature>
<feature type="repeat" description="WD 1">
    <location>
        <begin position="2"/>
        <end position="38"/>
    </location>
</feature>
<feature type="repeat" description="WD 2">
    <location>
        <begin position="44"/>
        <end position="87"/>
    </location>
</feature>
<feature type="repeat" description="WD 3">
    <location>
        <begin position="93"/>
        <end position="125"/>
    </location>
</feature>
<feature type="repeat" description="WD 4">
    <location>
        <begin position="130"/>
        <end position="171"/>
    </location>
</feature>
<feature type="repeat" description="WD 5">
    <location>
        <begin position="176"/>
        <end position="215"/>
    </location>
</feature>
<feature type="repeat" description="WD 6">
    <location>
        <begin position="220"/>
        <end position="259"/>
    </location>
</feature>
<feature type="repeat" description="WD 7">
    <location>
        <begin position="265"/>
        <end position="314"/>
    </location>
</feature>
<feature type="short sequence motif" description="L/FRRG motif" evidence="1">
    <location>
        <begin position="224"/>
        <end position="227"/>
    </location>
</feature>
<feature type="sequence variant" id="VAR_081110" description="In NEDSBAS; uncertain significance." evidence="3">
    <location>
        <begin position="225"/>
        <end position="344"/>
    </location>
</feature>
<feature type="sequence variant" id="VAR_081111" description="In NEDSBAS; uncertain significance." evidence="3">
    <location>
        <begin position="267"/>
        <end position="344"/>
    </location>
</feature>
<feature type="mutagenesis site" description="Abolished interaction with ATG2A." evidence="6">
    <original>NQDH</original>
    <variation>AQDA</variation>
    <location>
        <begin position="19"/>
        <end position="22"/>
    </location>
</feature>
<feature type="mutagenesis site" description="Strongly decreased interaction with ATG2A; when associated with 59-Q--A-62." evidence="6">
    <original>V</original>
    <variation>Q</variation>
    <location>
        <position position="35"/>
    </location>
</feature>
<feature type="mutagenesis site" description="Strongly decreased interaction with ATG2A; when associated with Q-35." evidence="6">
    <original>MLFR</original>
    <variation>QLRA</variation>
    <location>
        <begin position="59"/>
        <end position="62"/>
    </location>
</feature>
<feature type="mutagenesis site" description="Does not affect binding to phosphoinositides." evidence="5">
    <original>R</original>
    <variation>A</variation>
    <location>
        <position position="62"/>
    </location>
</feature>
<feature type="mutagenesis site" description="Strongly decreased interaction with ATG2A; when associated with A-125." evidence="6">
    <original>Y</original>
    <variation>A</variation>
    <location>
        <position position="65"/>
    </location>
</feature>
<feature type="mutagenesis site" description="Strongly decreased interaction with ATG2A." evidence="6">
    <original>IEF</original>
    <variation>AEA</variation>
    <location>
        <begin position="96"/>
        <end position="98"/>
    </location>
</feature>
<feature type="mutagenesis site" description="Strongly decreased interaction with ATG2A; when associated with A-65." evidence="6">
    <original>F</original>
    <variation>A</variation>
    <location>
        <position position="125"/>
    </location>
</feature>
<feature type="mutagenesis site" description="Abolished binding to phosphoinositides." evidence="5">
    <original>H</original>
    <variation>A</variation>
    <location>
        <position position="184"/>
    </location>
</feature>
<feature type="mutagenesis site" description="Abolished binding to phosphoinositides." evidence="5">
    <original>S</original>
    <variation>A</variation>
    <location>
        <position position="204"/>
    </location>
</feature>
<feature type="mutagenesis site" description="Abolished binding to phosphoinositides." evidence="5">
    <original>K</original>
    <variation>A</variation>
    <location>
        <position position="206"/>
    </location>
</feature>
<feature type="mutagenesis site" description="Abolished binding to phosphoinositides." evidence="5">
    <original>T</original>
    <variation>A</variation>
    <location>
        <position position="208"/>
    </location>
</feature>
<feature type="mutagenesis site" description="Abolished binding to phosphoinositides." evidence="5">
    <original>R</original>
    <variation>A</variation>
    <location>
        <position position="211"/>
    </location>
</feature>
<feature type="mutagenesis site" description="Loss of PtdIns3P binding." evidence="4">
    <original>RR</original>
    <variation>AA</variation>
    <location>
        <begin position="225"/>
        <end position="226"/>
    </location>
</feature>
<feature type="mutagenesis site" description="Abolished binding to phosphoinositides." evidence="5">
    <original>R</original>
    <variation>A</variation>
    <location>
        <position position="225"/>
    </location>
</feature>
<feature type="mutagenesis site" description="Abolished binding to phosphoinositides." evidence="5">
    <original>R</original>
    <variation>A</variation>
    <location>
        <position position="226"/>
    </location>
</feature>
<feature type="mutagenesis site" description="Abolished binding to phosphoinositides." evidence="5">
    <original>H</original>
    <variation>A</variation>
    <location>
        <position position="255"/>
    </location>
</feature>
<feature type="sequence conflict" description="In Ref. 5; AAC72952." evidence="7" ref="5">
    <original>HV</original>
    <variation>TR</variation>
    <location>
        <begin position="56"/>
        <end position="57"/>
    </location>
</feature>
<feature type="sequence conflict" description="In Ref. 7; CAG33051." evidence="7" ref="7">
    <original>V</original>
    <variation>A</variation>
    <location>
        <position position="69"/>
    </location>
</feature>
<feature type="sequence conflict" description="In Ref. 1; ASF79340." evidence="7" ref="1">
    <original>H</original>
    <variation>R</variation>
    <location>
        <position position="251"/>
    </location>
</feature>
<feature type="sequence conflict" description="In Ref. 6; AAV80763." evidence="7" ref="6">
    <original>V</original>
    <variation>A</variation>
    <location>
        <position position="254"/>
    </location>
</feature>
<feature type="sequence conflict" description="In Ref. 6; AAV80763 and 1; ASF79340." evidence="7" ref="6 1">
    <original>M</original>
    <variation>L</variation>
    <location>
        <position position="339"/>
    </location>
</feature>
<feature type="strand" evidence="10">
    <location>
        <begin position="10"/>
        <end position="18"/>
    </location>
</feature>
<feature type="strand" evidence="10">
    <location>
        <begin position="22"/>
        <end position="29"/>
    </location>
</feature>
<feature type="strand" evidence="10">
    <location>
        <begin position="32"/>
        <end position="37"/>
    </location>
</feature>
<feature type="turn" evidence="10">
    <location>
        <begin position="38"/>
        <end position="41"/>
    </location>
</feature>
<feature type="strand" evidence="10">
    <location>
        <begin position="42"/>
        <end position="47"/>
    </location>
</feature>
<feature type="strand" evidence="10">
    <location>
        <begin position="54"/>
        <end position="60"/>
    </location>
</feature>
<feature type="helix" evidence="10">
    <location>
        <begin position="61"/>
        <end position="63"/>
    </location>
</feature>
<feature type="strand" evidence="10">
    <location>
        <begin position="65"/>
        <end position="70"/>
    </location>
</feature>
<feature type="strand" evidence="10">
    <location>
        <begin position="81"/>
        <end position="86"/>
    </location>
</feature>
<feature type="turn" evidence="10">
    <location>
        <begin position="87"/>
        <end position="90"/>
    </location>
</feature>
<feature type="strand" evidence="10">
    <location>
        <begin position="91"/>
        <end position="97"/>
    </location>
</feature>
<feature type="strand" evidence="10">
    <location>
        <begin position="104"/>
        <end position="108"/>
    </location>
</feature>
<feature type="strand" evidence="10">
    <location>
        <begin position="111"/>
        <end position="115"/>
    </location>
</feature>
<feature type="strand" evidence="10">
    <location>
        <begin position="117"/>
        <end position="128"/>
    </location>
</feature>
<feature type="strand" evidence="10">
    <location>
        <begin position="131"/>
        <end position="136"/>
    </location>
</feature>
<feature type="strand" evidence="10">
    <location>
        <begin position="155"/>
        <end position="159"/>
    </location>
</feature>
<feature type="strand" evidence="10">
    <location>
        <begin position="165"/>
        <end position="170"/>
    </location>
</feature>
<feature type="strand" evidence="10">
    <location>
        <begin position="179"/>
        <end position="182"/>
    </location>
</feature>
<feature type="strand" evidence="10">
    <location>
        <begin position="188"/>
        <end position="193"/>
    </location>
</feature>
<feature type="strand" evidence="10">
    <location>
        <begin position="197"/>
        <end position="206"/>
    </location>
</feature>
<feature type="strand" evidence="10">
    <location>
        <begin position="208"/>
        <end position="214"/>
    </location>
</feature>
<feature type="turn" evidence="10">
    <location>
        <begin position="215"/>
        <end position="217"/>
    </location>
</feature>
<feature type="strand" evidence="10">
    <location>
        <begin position="220"/>
        <end position="225"/>
    </location>
</feature>
<feature type="strand" evidence="10">
    <location>
        <begin position="233"/>
        <end position="238"/>
    </location>
</feature>
<feature type="strand" evidence="10">
    <location>
        <begin position="242"/>
        <end position="249"/>
    </location>
</feature>
<feature type="strand" evidence="10">
    <location>
        <begin position="252"/>
        <end position="258"/>
    </location>
</feature>
<feature type="strand" evidence="10">
    <location>
        <begin position="286"/>
        <end position="290"/>
    </location>
</feature>
<feature type="strand" evidence="10">
    <location>
        <begin position="297"/>
        <end position="301"/>
    </location>
</feature>
<feature type="strand" evidence="10">
    <location>
        <begin position="307"/>
        <end position="312"/>
    </location>
</feature>
<feature type="strand" evidence="10">
    <location>
        <begin position="315"/>
        <end position="321"/>
    </location>
</feature>
<feature type="strand" evidence="10">
    <location>
        <begin position="329"/>
        <end position="335"/>
    </location>
</feature>
<feature type="helix" evidence="10">
    <location>
        <begin position="336"/>
        <end position="338"/>
    </location>
</feature>
<protein>
    <recommendedName>
        <fullName>WD repeat domain phosphoinositide-interacting protein 3</fullName>
        <shortName>WIPI-3</shortName>
    </recommendedName>
    <alternativeName>
        <fullName>WD repeat-containing protein 45-like</fullName>
        <shortName>WDR45-like protein</shortName>
    </alternativeName>
    <alternativeName>
        <fullName>WD repeat-containing protein 45B</fullName>
    </alternativeName>
    <alternativeName>
        <fullName>WIPI49-like protein</fullName>
    </alternativeName>
</protein>
<organism>
    <name type="scientific">Homo sapiens</name>
    <name type="common">Human</name>
    <dbReference type="NCBI Taxonomy" id="9606"/>
    <lineage>
        <taxon>Eukaryota</taxon>
        <taxon>Metazoa</taxon>
        <taxon>Chordata</taxon>
        <taxon>Craniata</taxon>
        <taxon>Vertebrata</taxon>
        <taxon>Euteleostomi</taxon>
        <taxon>Mammalia</taxon>
        <taxon>Eutheria</taxon>
        <taxon>Euarchontoglires</taxon>
        <taxon>Primates</taxon>
        <taxon>Haplorrhini</taxon>
        <taxon>Catarrhini</taxon>
        <taxon>Hominidae</taxon>
        <taxon>Homo</taxon>
    </lineage>
</organism>
<proteinExistence type="evidence at protein level"/>